<dbReference type="EC" id="3.1.3.16" evidence="1 3"/>
<dbReference type="EC" id="3.1.3.48" evidence="1 3"/>
<dbReference type="EMBL" id="AABR07054333">
    <property type="status" value="NOT_ANNOTATED_CDS"/>
    <property type="molecule type" value="Genomic_DNA"/>
</dbReference>
<dbReference type="EMBL" id="CH474050">
    <property type="protein sequence ID" value="EDL86031.1"/>
    <property type="molecule type" value="Genomic_DNA"/>
</dbReference>
<dbReference type="EMBL" id="BC168211">
    <property type="protein sequence ID" value="AAI68211.1"/>
    <property type="molecule type" value="mRNA"/>
</dbReference>
<dbReference type="RefSeq" id="NP_001102068.2">
    <property type="nucleotide sequence ID" value="NM_001108598.2"/>
</dbReference>
<dbReference type="RefSeq" id="NP_001231713.1">
    <property type="nucleotide sequence ID" value="NM_001244784.1"/>
</dbReference>
<dbReference type="SMR" id="B4F7B7"/>
<dbReference type="FunCoup" id="B4F7B7">
    <property type="interactions" value="21"/>
</dbReference>
<dbReference type="STRING" id="10116.ENSRNOP00000067584"/>
<dbReference type="PhosphoSitePlus" id="B4F7B7"/>
<dbReference type="PaxDb" id="10116-ENSRNOP00000067584"/>
<dbReference type="Ensembl" id="ENSRNOT00000011350.8">
    <property type="protein sequence ID" value="ENSRNOP00000011350.5"/>
    <property type="gene ID" value="ENSRNOG00000008534.9"/>
</dbReference>
<dbReference type="GeneID" id="362238"/>
<dbReference type="KEGG" id="rno:362238"/>
<dbReference type="UCSC" id="RGD:1305990">
    <property type="organism name" value="rat"/>
</dbReference>
<dbReference type="AGR" id="RGD:1305990"/>
<dbReference type="CTD" id="128853"/>
<dbReference type="RGD" id="1305990">
    <property type="gene designation" value="Dusp15"/>
</dbReference>
<dbReference type="eggNOG" id="KOG1716">
    <property type="taxonomic scope" value="Eukaryota"/>
</dbReference>
<dbReference type="GeneTree" id="ENSGT00940000162011"/>
<dbReference type="HOGENOM" id="CLU_027074_5_0_1"/>
<dbReference type="InParanoid" id="B4F7B7"/>
<dbReference type="OrthoDB" id="44077at9989"/>
<dbReference type="PhylomeDB" id="B4F7B7"/>
<dbReference type="TreeFam" id="TF105126"/>
<dbReference type="PRO" id="PR:B4F7B7"/>
<dbReference type="Proteomes" id="UP000002494">
    <property type="component" value="Chromosome 3"/>
</dbReference>
<dbReference type="Proteomes" id="UP000234681">
    <property type="component" value="Chromosome 3"/>
</dbReference>
<dbReference type="Bgee" id="ENSRNOG00000008534">
    <property type="expression patterns" value="Expressed in testis and 11 other cell types or tissues"/>
</dbReference>
<dbReference type="ExpressionAtlas" id="B4F7B7">
    <property type="expression patterns" value="baseline and differential"/>
</dbReference>
<dbReference type="GO" id="GO:0005829">
    <property type="term" value="C:cytosol"/>
    <property type="evidence" value="ECO:0000318"/>
    <property type="project" value="GO_Central"/>
</dbReference>
<dbReference type="GO" id="GO:0005886">
    <property type="term" value="C:plasma membrane"/>
    <property type="evidence" value="ECO:0000318"/>
    <property type="project" value="GO_Central"/>
</dbReference>
<dbReference type="GO" id="GO:0016791">
    <property type="term" value="F:phosphatase activity"/>
    <property type="evidence" value="ECO:0000266"/>
    <property type="project" value="RGD"/>
</dbReference>
<dbReference type="GO" id="GO:0004722">
    <property type="term" value="F:protein serine/threonine phosphatase activity"/>
    <property type="evidence" value="ECO:0007669"/>
    <property type="project" value="UniProtKB-EC"/>
</dbReference>
<dbReference type="GO" id="GO:0004725">
    <property type="term" value="F:protein tyrosine phosphatase activity"/>
    <property type="evidence" value="ECO:0000266"/>
    <property type="project" value="RGD"/>
</dbReference>
<dbReference type="GO" id="GO:0008138">
    <property type="term" value="F:protein tyrosine/serine/threonine phosphatase activity"/>
    <property type="evidence" value="ECO:0000266"/>
    <property type="project" value="RGD"/>
</dbReference>
<dbReference type="GO" id="GO:0000122">
    <property type="term" value="P:negative regulation of transcription by RNA polymerase II"/>
    <property type="evidence" value="ECO:0000315"/>
    <property type="project" value="UniProtKB"/>
</dbReference>
<dbReference type="GO" id="GO:0070374">
    <property type="term" value="P:positive regulation of ERK1 and ERK2 cascade"/>
    <property type="evidence" value="ECO:0000315"/>
    <property type="project" value="UniProtKB"/>
</dbReference>
<dbReference type="GO" id="GO:0048713">
    <property type="term" value="P:regulation of oligodendrocyte differentiation"/>
    <property type="evidence" value="ECO:0000266"/>
    <property type="project" value="RGD"/>
</dbReference>
<dbReference type="GO" id="GO:0007165">
    <property type="term" value="P:signal transduction"/>
    <property type="evidence" value="ECO:0000318"/>
    <property type="project" value="GO_Central"/>
</dbReference>
<dbReference type="CDD" id="cd14582">
    <property type="entry name" value="DSP_DUSP15"/>
    <property type="match status" value="1"/>
</dbReference>
<dbReference type="FunFam" id="3.90.190.10:FF:000052">
    <property type="entry name" value="Dual specificity phosphatase 15"/>
    <property type="match status" value="1"/>
</dbReference>
<dbReference type="Gene3D" id="3.90.190.10">
    <property type="entry name" value="Protein tyrosine phosphatase superfamily"/>
    <property type="match status" value="1"/>
</dbReference>
<dbReference type="InterPro" id="IPR000340">
    <property type="entry name" value="Dual-sp_phosphatase_cat-dom"/>
</dbReference>
<dbReference type="InterPro" id="IPR029021">
    <property type="entry name" value="Prot-tyrosine_phosphatase-like"/>
</dbReference>
<dbReference type="InterPro" id="IPR016130">
    <property type="entry name" value="Tyr_Pase_AS"/>
</dbReference>
<dbReference type="InterPro" id="IPR000387">
    <property type="entry name" value="Tyr_Pase_dom"/>
</dbReference>
<dbReference type="InterPro" id="IPR020422">
    <property type="entry name" value="TYR_PHOSPHATASE_DUAL_dom"/>
</dbReference>
<dbReference type="PANTHER" id="PTHR45948:SF4">
    <property type="entry name" value="DUAL SPECIFICITY PROTEIN PHOSPHATASE 15"/>
    <property type="match status" value="1"/>
</dbReference>
<dbReference type="PANTHER" id="PTHR45948">
    <property type="entry name" value="DUAL SPECIFICITY PROTEIN PHOSPHATASE DDB_G0269404-RELATED"/>
    <property type="match status" value="1"/>
</dbReference>
<dbReference type="Pfam" id="PF00782">
    <property type="entry name" value="DSPc"/>
    <property type="match status" value="1"/>
</dbReference>
<dbReference type="PRINTS" id="PR01908">
    <property type="entry name" value="ADSPHPHTASE"/>
</dbReference>
<dbReference type="SMART" id="SM00195">
    <property type="entry name" value="DSPc"/>
    <property type="match status" value="1"/>
</dbReference>
<dbReference type="SUPFAM" id="SSF52799">
    <property type="entry name" value="(Phosphotyrosine protein) phosphatases II"/>
    <property type="match status" value="1"/>
</dbReference>
<dbReference type="PROSITE" id="PS00383">
    <property type="entry name" value="TYR_PHOSPHATASE_1"/>
    <property type="match status" value="1"/>
</dbReference>
<dbReference type="PROSITE" id="PS50056">
    <property type="entry name" value="TYR_PHOSPHATASE_2"/>
    <property type="match status" value="1"/>
</dbReference>
<dbReference type="PROSITE" id="PS50054">
    <property type="entry name" value="TYR_PHOSPHATASE_DUAL"/>
    <property type="match status" value="1"/>
</dbReference>
<comment type="function">
    <text evidence="1 5 6">May play a role in the regulation of oligodendrocyte differentiation. May play a role in the regulation of myelin formation (PubMed:27532821). Involved in the regulation of Erk1/2 phosphorylation in Schwann cells; the signaling may be linked to the regulation of myelination (PubMed:27891578). May dephosphorylate MAPK13, ATF2, ERBB3, PDGFRB and SNX6 (By similarity).</text>
</comment>
<comment type="catalytic activity">
    <reaction evidence="1 3">
        <text>O-phospho-L-tyrosyl-[protein] + H2O = L-tyrosyl-[protein] + phosphate</text>
        <dbReference type="Rhea" id="RHEA:10684"/>
        <dbReference type="Rhea" id="RHEA-COMP:10136"/>
        <dbReference type="Rhea" id="RHEA-COMP:20101"/>
        <dbReference type="ChEBI" id="CHEBI:15377"/>
        <dbReference type="ChEBI" id="CHEBI:43474"/>
        <dbReference type="ChEBI" id="CHEBI:46858"/>
        <dbReference type="ChEBI" id="CHEBI:61978"/>
        <dbReference type="EC" id="3.1.3.48"/>
    </reaction>
</comment>
<comment type="catalytic activity">
    <reaction>
        <text>O-phospho-L-seryl-[protein] + H2O = L-seryl-[protein] + phosphate</text>
        <dbReference type="Rhea" id="RHEA:20629"/>
        <dbReference type="Rhea" id="RHEA-COMP:9863"/>
        <dbReference type="Rhea" id="RHEA-COMP:11604"/>
        <dbReference type="ChEBI" id="CHEBI:15377"/>
        <dbReference type="ChEBI" id="CHEBI:29999"/>
        <dbReference type="ChEBI" id="CHEBI:43474"/>
        <dbReference type="ChEBI" id="CHEBI:83421"/>
        <dbReference type="EC" id="3.1.3.16"/>
    </reaction>
</comment>
<comment type="catalytic activity">
    <reaction>
        <text>O-phospho-L-threonyl-[protein] + H2O = L-threonyl-[protein] + phosphate</text>
        <dbReference type="Rhea" id="RHEA:47004"/>
        <dbReference type="Rhea" id="RHEA-COMP:11060"/>
        <dbReference type="Rhea" id="RHEA-COMP:11605"/>
        <dbReference type="ChEBI" id="CHEBI:15377"/>
        <dbReference type="ChEBI" id="CHEBI:30013"/>
        <dbReference type="ChEBI" id="CHEBI:43474"/>
        <dbReference type="ChEBI" id="CHEBI:61977"/>
        <dbReference type="EC" id="3.1.3.16"/>
    </reaction>
</comment>
<comment type="subcellular location">
    <subcellularLocation>
        <location evidence="1">Cell membrane</location>
        <topology>Lipid-anchor</topology>
        <orientation>Cytoplasmic side</orientation>
    </subcellularLocation>
</comment>
<comment type="developmental stage">
    <text evidence="5">Expression increases during oligodendrocyte differentiation.</text>
</comment>
<comment type="similarity">
    <text evidence="7">Belongs to the protein-tyrosine phosphatase family. Non-receptor class dual specificity subfamily.</text>
</comment>
<accession>B4F7B7</accession>
<sequence>MGNGMTKVLPGLYLGNFIDAKDPDQLGRNKITHIVSIHESPQPLLQDITYLRISVSDTPEVPIKKHFKECVHFIHSCRLNGGNCLVHCFAGISRSTTVVIAYVMTVTGLGWQEVLEAIKASRPIANPNPGFRQQLEEFGWANSQKLRRQLEERFGEIPFRDEEDLRALLPLCRRCRQGPGTSAPSATTASSAASEGTLQRLVPRSPRESHRPLPLLARVKQTFFCLPRCLSRKGGK</sequence>
<name>DUS15_RAT</name>
<evidence type="ECO:0000250" key="1">
    <source>
        <dbReference type="UniProtKB" id="Q9H1R2"/>
    </source>
</evidence>
<evidence type="ECO:0000255" key="2">
    <source>
        <dbReference type="PROSITE-ProRule" id="PRU00160"/>
    </source>
</evidence>
<evidence type="ECO:0000255" key="3">
    <source>
        <dbReference type="PROSITE-ProRule" id="PRU10044"/>
    </source>
</evidence>
<evidence type="ECO:0000256" key="4">
    <source>
        <dbReference type="SAM" id="MobiDB-lite"/>
    </source>
</evidence>
<evidence type="ECO:0000269" key="5">
    <source>
    </source>
</evidence>
<evidence type="ECO:0000269" key="6">
    <source>
    </source>
</evidence>
<evidence type="ECO:0000305" key="7"/>
<keyword id="KW-1003">Cell membrane</keyword>
<keyword id="KW-0378">Hydrolase</keyword>
<keyword id="KW-0449">Lipoprotein</keyword>
<keyword id="KW-0472">Membrane</keyword>
<keyword id="KW-0519">Myristate</keyword>
<keyword id="KW-0904">Protein phosphatase</keyword>
<keyword id="KW-1185">Reference proteome</keyword>
<organism>
    <name type="scientific">Rattus norvegicus</name>
    <name type="common">Rat</name>
    <dbReference type="NCBI Taxonomy" id="10116"/>
    <lineage>
        <taxon>Eukaryota</taxon>
        <taxon>Metazoa</taxon>
        <taxon>Chordata</taxon>
        <taxon>Craniata</taxon>
        <taxon>Vertebrata</taxon>
        <taxon>Euteleostomi</taxon>
        <taxon>Mammalia</taxon>
        <taxon>Eutheria</taxon>
        <taxon>Euarchontoglires</taxon>
        <taxon>Glires</taxon>
        <taxon>Rodentia</taxon>
        <taxon>Myomorpha</taxon>
        <taxon>Muroidea</taxon>
        <taxon>Muridae</taxon>
        <taxon>Murinae</taxon>
        <taxon>Rattus</taxon>
    </lineage>
</organism>
<proteinExistence type="evidence at transcript level"/>
<gene>
    <name type="primary">Dusp15</name>
</gene>
<reference key="1">
    <citation type="journal article" date="2004" name="Nature">
        <title>Genome sequence of the Brown Norway rat yields insights into mammalian evolution.</title>
        <authorList>
            <person name="Gibbs R.A."/>
            <person name="Weinstock G.M."/>
            <person name="Metzker M.L."/>
            <person name="Muzny D.M."/>
            <person name="Sodergren E.J."/>
            <person name="Scherer S."/>
            <person name="Scott G."/>
            <person name="Steffen D."/>
            <person name="Worley K.C."/>
            <person name="Burch P.E."/>
            <person name="Okwuonu G."/>
            <person name="Hines S."/>
            <person name="Lewis L."/>
            <person name="Deramo C."/>
            <person name="Delgado O."/>
            <person name="Dugan-Rocha S."/>
            <person name="Miner G."/>
            <person name="Morgan M."/>
            <person name="Hawes A."/>
            <person name="Gill R."/>
            <person name="Holt R.A."/>
            <person name="Adams M.D."/>
            <person name="Amanatides P.G."/>
            <person name="Baden-Tillson H."/>
            <person name="Barnstead M."/>
            <person name="Chin S."/>
            <person name="Evans C.A."/>
            <person name="Ferriera S."/>
            <person name="Fosler C."/>
            <person name="Glodek A."/>
            <person name="Gu Z."/>
            <person name="Jennings D."/>
            <person name="Kraft C.L."/>
            <person name="Nguyen T."/>
            <person name="Pfannkoch C.M."/>
            <person name="Sitter C."/>
            <person name="Sutton G.G."/>
            <person name="Venter J.C."/>
            <person name="Woodage T."/>
            <person name="Smith D."/>
            <person name="Lee H.-M."/>
            <person name="Gustafson E."/>
            <person name="Cahill P."/>
            <person name="Kana A."/>
            <person name="Doucette-Stamm L."/>
            <person name="Weinstock K."/>
            <person name="Fechtel K."/>
            <person name="Weiss R.B."/>
            <person name="Dunn D.M."/>
            <person name="Green E.D."/>
            <person name="Blakesley R.W."/>
            <person name="Bouffard G.G."/>
            <person name="De Jong P.J."/>
            <person name="Osoegawa K."/>
            <person name="Zhu B."/>
            <person name="Marra M."/>
            <person name="Schein J."/>
            <person name="Bosdet I."/>
            <person name="Fjell C."/>
            <person name="Jones S."/>
            <person name="Krzywinski M."/>
            <person name="Mathewson C."/>
            <person name="Siddiqui A."/>
            <person name="Wye N."/>
            <person name="McPherson J."/>
            <person name="Zhao S."/>
            <person name="Fraser C.M."/>
            <person name="Shetty J."/>
            <person name="Shatsman S."/>
            <person name="Geer K."/>
            <person name="Chen Y."/>
            <person name="Abramzon S."/>
            <person name="Nierman W.C."/>
            <person name="Havlak P.H."/>
            <person name="Chen R."/>
            <person name="Durbin K.J."/>
            <person name="Egan A."/>
            <person name="Ren Y."/>
            <person name="Song X.-Z."/>
            <person name="Li B."/>
            <person name="Liu Y."/>
            <person name="Qin X."/>
            <person name="Cawley S."/>
            <person name="Cooney A.J."/>
            <person name="D'Souza L.M."/>
            <person name="Martin K."/>
            <person name="Wu J.Q."/>
            <person name="Gonzalez-Garay M.L."/>
            <person name="Jackson A.R."/>
            <person name="Kalafus K.J."/>
            <person name="McLeod M.P."/>
            <person name="Milosavljevic A."/>
            <person name="Virk D."/>
            <person name="Volkov A."/>
            <person name="Wheeler D.A."/>
            <person name="Zhang Z."/>
            <person name="Bailey J.A."/>
            <person name="Eichler E.E."/>
            <person name="Tuzun E."/>
            <person name="Birney E."/>
            <person name="Mongin E."/>
            <person name="Ureta-Vidal A."/>
            <person name="Woodwark C."/>
            <person name="Zdobnov E."/>
            <person name="Bork P."/>
            <person name="Suyama M."/>
            <person name="Torrents D."/>
            <person name="Alexandersson M."/>
            <person name="Trask B.J."/>
            <person name="Young J.M."/>
            <person name="Huang H."/>
            <person name="Wang H."/>
            <person name="Xing H."/>
            <person name="Daniels S."/>
            <person name="Gietzen D."/>
            <person name="Schmidt J."/>
            <person name="Stevens K."/>
            <person name="Vitt U."/>
            <person name="Wingrove J."/>
            <person name="Camara F."/>
            <person name="Mar Alba M."/>
            <person name="Abril J.F."/>
            <person name="Guigo R."/>
            <person name="Smit A."/>
            <person name="Dubchak I."/>
            <person name="Rubin E.M."/>
            <person name="Couronne O."/>
            <person name="Poliakov A."/>
            <person name="Huebner N."/>
            <person name="Ganten D."/>
            <person name="Goesele C."/>
            <person name="Hummel O."/>
            <person name="Kreitler T."/>
            <person name="Lee Y.-A."/>
            <person name="Monti J."/>
            <person name="Schulz H."/>
            <person name="Zimdahl H."/>
            <person name="Himmelbauer H."/>
            <person name="Lehrach H."/>
            <person name="Jacob H.J."/>
            <person name="Bromberg S."/>
            <person name="Gullings-Handley J."/>
            <person name="Jensen-Seaman M.I."/>
            <person name="Kwitek A.E."/>
            <person name="Lazar J."/>
            <person name="Pasko D."/>
            <person name="Tonellato P.J."/>
            <person name="Twigger S."/>
            <person name="Ponting C.P."/>
            <person name="Duarte J.M."/>
            <person name="Rice S."/>
            <person name="Goodstadt L."/>
            <person name="Beatson S.A."/>
            <person name="Emes R.D."/>
            <person name="Winter E.E."/>
            <person name="Webber C."/>
            <person name="Brandt P."/>
            <person name="Nyakatura G."/>
            <person name="Adetobi M."/>
            <person name="Chiaromonte F."/>
            <person name="Elnitski L."/>
            <person name="Eswara P."/>
            <person name="Hardison R.C."/>
            <person name="Hou M."/>
            <person name="Kolbe D."/>
            <person name="Makova K."/>
            <person name="Miller W."/>
            <person name="Nekrutenko A."/>
            <person name="Riemer C."/>
            <person name="Schwartz S."/>
            <person name="Taylor J."/>
            <person name="Yang S."/>
            <person name="Zhang Y."/>
            <person name="Lindpaintner K."/>
            <person name="Andrews T.D."/>
            <person name="Caccamo M."/>
            <person name="Clamp M."/>
            <person name="Clarke L."/>
            <person name="Curwen V."/>
            <person name="Durbin R.M."/>
            <person name="Eyras E."/>
            <person name="Searle S.M."/>
            <person name="Cooper G.M."/>
            <person name="Batzoglou S."/>
            <person name="Brudno M."/>
            <person name="Sidow A."/>
            <person name="Stone E.A."/>
            <person name="Payseur B.A."/>
            <person name="Bourque G."/>
            <person name="Lopez-Otin C."/>
            <person name="Puente X.S."/>
            <person name="Chakrabarti K."/>
            <person name="Chatterji S."/>
            <person name="Dewey C."/>
            <person name="Pachter L."/>
            <person name="Bray N."/>
            <person name="Yap V.B."/>
            <person name="Caspi A."/>
            <person name="Tesler G."/>
            <person name="Pevzner P.A."/>
            <person name="Haussler D."/>
            <person name="Roskin K.M."/>
            <person name="Baertsch R."/>
            <person name="Clawson H."/>
            <person name="Furey T.S."/>
            <person name="Hinrichs A.S."/>
            <person name="Karolchik D."/>
            <person name="Kent W.J."/>
            <person name="Rosenbloom K.R."/>
            <person name="Trumbower H."/>
            <person name="Weirauch M."/>
            <person name="Cooper D.N."/>
            <person name="Stenson P.D."/>
            <person name="Ma B."/>
            <person name="Brent M."/>
            <person name="Arumugam M."/>
            <person name="Shteynberg D."/>
            <person name="Copley R.R."/>
            <person name="Taylor M.S."/>
            <person name="Riethman H."/>
            <person name="Mudunuri U."/>
            <person name="Peterson J."/>
            <person name="Guyer M."/>
            <person name="Felsenfeld A."/>
            <person name="Old S."/>
            <person name="Mockrin S."/>
            <person name="Collins F.S."/>
        </authorList>
    </citation>
    <scope>NUCLEOTIDE SEQUENCE [LARGE SCALE GENOMIC DNA]</scope>
    <source>
        <strain>Brown Norway</strain>
    </source>
</reference>
<reference key="2">
    <citation type="submission" date="2005-09" db="EMBL/GenBank/DDBJ databases">
        <authorList>
            <person name="Mural R.J."/>
            <person name="Adams M.D."/>
            <person name="Myers E.W."/>
            <person name="Smith H.O."/>
            <person name="Venter J.C."/>
        </authorList>
    </citation>
    <scope>NUCLEOTIDE SEQUENCE [LARGE SCALE GENOMIC DNA]</scope>
    <source>
        <strain>Brown Norway</strain>
    </source>
</reference>
<reference key="3">
    <citation type="journal article" date="2004" name="Genome Res.">
        <title>The status, quality, and expansion of the NIH full-length cDNA project: the Mammalian Gene Collection (MGC).</title>
        <authorList>
            <consortium name="The MGC Project Team"/>
        </authorList>
    </citation>
    <scope>NUCLEOTIDE SEQUENCE [LARGE SCALE MRNA]</scope>
    <source>
        <tissue>Testis</tissue>
    </source>
</reference>
<reference key="4">
    <citation type="journal article" date="2016" name="Glia">
        <title>The dual-specificity phosphatase Dusp15 is regulated by Sox10 and Myrf in myelinating oligodendrocytes.</title>
        <authorList>
            <person name="Muth K.N."/>
            <person name="Piefke S."/>
            <person name="Weider M."/>
            <person name="Sock E."/>
            <person name="Hermans-Borgmeyer I."/>
            <person name="Wegner M."/>
            <person name="Kuespert M."/>
        </authorList>
    </citation>
    <scope>FUNCTION</scope>
    <scope>DEVELOPMENTAL STAGE</scope>
</reference>
<reference key="5">
    <citation type="journal article" date="2017" name="J. Neurochem.">
        <title>Dual specificity phosphatase 15 regulates Erk activation in Schwann cells.</title>
        <authorList>
            <person name="Rodriguez-Molina J.F."/>
            <person name="Lopez-Anido C."/>
            <person name="Ma K.H."/>
            <person name="Zhang C."/>
            <person name="Olson T."/>
            <person name="Muth K.N."/>
            <person name="Weider M."/>
            <person name="Svaren J."/>
        </authorList>
    </citation>
    <scope>FUNCTION</scope>
</reference>
<protein>
    <recommendedName>
        <fullName evidence="1">Dual specificity protein phosphatase 15</fullName>
        <ecNumber evidence="1 3">3.1.3.16</ecNumber>
        <ecNumber evidence="1 3">3.1.3.48</ecNumber>
    </recommendedName>
</protein>
<feature type="initiator methionine" description="Removed">
    <location>
        <position position="1"/>
    </location>
</feature>
<feature type="chain" id="PRO_0000440699" description="Dual specificity protein phosphatase 15">
    <location>
        <begin position="2"/>
        <end position="236"/>
    </location>
</feature>
<feature type="domain" description="Tyrosine-protein phosphatase" evidence="2">
    <location>
        <begin position="4"/>
        <end position="144"/>
    </location>
</feature>
<feature type="region of interest" description="Disordered" evidence="4">
    <location>
        <begin position="178"/>
        <end position="213"/>
    </location>
</feature>
<feature type="compositionally biased region" description="Low complexity" evidence="4">
    <location>
        <begin position="181"/>
        <end position="194"/>
    </location>
</feature>
<feature type="active site" description="Phosphocysteine intermediate" evidence="2">
    <location>
        <position position="88"/>
    </location>
</feature>
<feature type="lipid moiety-binding region" description="N-myristoyl glycine" evidence="1">
    <location>
        <position position="2"/>
    </location>
</feature>